<comment type="function">
    <text evidence="1">Multifunctional enzyme that catalyzes the SAM-dependent methylations of uroporphyrinogen III at position C-2 and C-7 to form precorrin-2 via precorrin-1. Then it catalyzes the NAD-dependent ring dehydrogenation of precorrin-2 to yield sirohydrochlorin. Finally, it catalyzes the ferrochelation of sirohydrochlorin to yield siroheme.</text>
</comment>
<comment type="catalytic activity">
    <reaction evidence="1">
        <text>uroporphyrinogen III + 2 S-adenosyl-L-methionine = precorrin-2 + 2 S-adenosyl-L-homocysteine + H(+)</text>
        <dbReference type="Rhea" id="RHEA:32459"/>
        <dbReference type="ChEBI" id="CHEBI:15378"/>
        <dbReference type="ChEBI" id="CHEBI:57308"/>
        <dbReference type="ChEBI" id="CHEBI:57856"/>
        <dbReference type="ChEBI" id="CHEBI:58827"/>
        <dbReference type="ChEBI" id="CHEBI:59789"/>
        <dbReference type="EC" id="2.1.1.107"/>
    </reaction>
</comment>
<comment type="catalytic activity">
    <reaction evidence="1">
        <text>precorrin-2 + NAD(+) = sirohydrochlorin + NADH + 2 H(+)</text>
        <dbReference type="Rhea" id="RHEA:15613"/>
        <dbReference type="ChEBI" id="CHEBI:15378"/>
        <dbReference type="ChEBI" id="CHEBI:57540"/>
        <dbReference type="ChEBI" id="CHEBI:57945"/>
        <dbReference type="ChEBI" id="CHEBI:58351"/>
        <dbReference type="ChEBI" id="CHEBI:58827"/>
        <dbReference type="EC" id="1.3.1.76"/>
    </reaction>
</comment>
<comment type="catalytic activity">
    <reaction evidence="1">
        <text>siroheme + 2 H(+) = sirohydrochlorin + Fe(2+)</text>
        <dbReference type="Rhea" id="RHEA:24360"/>
        <dbReference type="ChEBI" id="CHEBI:15378"/>
        <dbReference type="ChEBI" id="CHEBI:29033"/>
        <dbReference type="ChEBI" id="CHEBI:58351"/>
        <dbReference type="ChEBI" id="CHEBI:60052"/>
        <dbReference type="EC" id="4.99.1.4"/>
    </reaction>
</comment>
<comment type="pathway">
    <text evidence="1">Cofactor biosynthesis; adenosylcobalamin biosynthesis; precorrin-2 from uroporphyrinogen III: step 1/1.</text>
</comment>
<comment type="pathway">
    <text evidence="1">Cofactor biosynthesis; adenosylcobalamin biosynthesis; sirohydrochlorin from precorrin-2: step 1/1.</text>
</comment>
<comment type="pathway">
    <text evidence="1">Porphyrin-containing compound metabolism; siroheme biosynthesis; precorrin-2 from uroporphyrinogen III: step 1/1.</text>
</comment>
<comment type="pathway">
    <text evidence="1">Porphyrin-containing compound metabolism; siroheme biosynthesis; siroheme from sirohydrochlorin: step 1/1.</text>
</comment>
<comment type="pathway">
    <text evidence="1">Porphyrin-containing compound metabolism; siroheme biosynthesis; sirohydrochlorin from precorrin-2: step 1/1.</text>
</comment>
<comment type="similarity">
    <text evidence="1">In the N-terminal section; belongs to the precorrin-2 dehydrogenase / sirohydrochlorin ferrochelatase family.</text>
</comment>
<comment type="similarity">
    <text evidence="1">In the C-terminal section; belongs to the precorrin methyltransferase family.</text>
</comment>
<reference key="1">
    <citation type="journal article" date="2011" name="J. Bacteriol.">
        <title>Comparative genomics of 28 Salmonella enterica isolates: evidence for CRISPR-mediated adaptive sublineage evolution.</title>
        <authorList>
            <person name="Fricke W.F."/>
            <person name="Mammel M.K."/>
            <person name="McDermott P.F."/>
            <person name="Tartera C."/>
            <person name="White D.G."/>
            <person name="Leclerc J.E."/>
            <person name="Ravel J."/>
            <person name="Cebula T.A."/>
        </authorList>
    </citation>
    <scope>NUCLEOTIDE SEQUENCE [LARGE SCALE GENOMIC DNA]</scope>
    <source>
        <strain>SL483</strain>
    </source>
</reference>
<feature type="chain" id="PRO_1000186950" description="Siroheme synthase">
    <location>
        <begin position="1"/>
        <end position="459"/>
    </location>
</feature>
<feature type="region of interest" description="Precorrin-2 dehydrogenase /sirohydrochlorin ferrochelatase" evidence="1">
    <location>
        <begin position="1"/>
        <end position="204"/>
    </location>
</feature>
<feature type="region of interest" description="Uroporphyrinogen-III C-methyltransferase" evidence="1">
    <location>
        <begin position="216"/>
        <end position="459"/>
    </location>
</feature>
<feature type="active site" description="Proton acceptor" evidence="1">
    <location>
        <position position="248"/>
    </location>
</feature>
<feature type="active site" description="Proton donor" evidence="1">
    <location>
        <position position="270"/>
    </location>
</feature>
<feature type="binding site" evidence="1">
    <location>
        <begin position="22"/>
        <end position="23"/>
    </location>
    <ligand>
        <name>NAD(+)</name>
        <dbReference type="ChEBI" id="CHEBI:57540"/>
    </ligand>
</feature>
<feature type="binding site" evidence="1">
    <location>
        <begin position="43"/>
        <end position="44"/>
    </location>
    <ligand>
        <name>NAD(+)</name>
        <dbReference type="ChEBI" id="CHEBI:57540"/>
    </ligand>
</feature>
<feature type="binding site" evidence="1">
    <location>
        <position position="225"/>
    </location>
    <ligand>
        <name>S-adenosyl-L-methionine</name>
        <dbReference type="ChEBI" id="CHEBI:59789"/>
    </ligand>
</feature>
<feature type="binding site" evidence="1">
    <location>
        <begin position="301"/>
        <end position="303"/>
    </location>
    <ligand>
        <name>S-adenosyl-L-methionine</name>
        <dbReference type="ChEBI" id="CHEBI:59789"/>
    </ligand>
</feature>
<feature type="binding site" evidence="1">
    <location>
        <position position="306"/>
    </location>
    <ligand>
        <name>S-adenosyl-L-methionine</name>
        <dbReference type="ChEBI" id="CHEBI:59789"/>
    </ligand>
</feature>
<feature type="binding site" evidence="1">
    <location>
        <begin position="331"/>
        <end position="332"/>
    </location>
    <ligand>
        <name>S-adenosyl-L-methionine</name>
        <dbReference type="ChEBI" id="CHEBI:59789"/>
    </ligand>
</feature>
<feature type="binding site" evidence="1">
    <location>
        <position position="382"/>
    </location>
    <ligand>
        <name>S-adenosyl-L-methionine</name>
        <dbReference type="ChEBI" id="CHEBI:59789"/>
    </ligand>
</feature>
<feature type="binding site" evidence="1">
    <location>
        <position position="411"/>
    </location>
    <ligand>
        <name>S-adenosyl-L-methionine</name>
        <dbReference type="ChEBI" id="CHEBI:59789"/>
    </ligand>
</feature>
<feature type="modified residue" description="Phosphoserine" evidence="1">
    <location>
        <position position="128"/>
    </location>
</feature>
<keyword id="KW-0169">Cobalamin biosynthesis</keyword>
<keyword id="KW-0456">Lyase</keyword>
<keyword id="KW-0489">Methyltransferase</keyword>
<keyword id="KW-0511">Multifunctional enzyme</keyword>
<keyword id="KW-0520">NAD</keyword>
<keyword id="KW-0560">Oxidoreductase</keyword>
<keyword id="KW-0597">Phosphoprotein</keyword>
<keyword id="KW-0627">Porphyrin biosynthesis</keyword>
<keyword id="KW-0949">S-adenosyl-L-methionine</keyword>
<keyword id="KW-0808">Transferase</keyword>
<name>CYSG_SALA4</name>
<accession>B5F8J0</accession>
<sequence length="459" mass="50437">MDHLPIFCQLRDRDCLIVGGGDVAERKARLLLEAGARLTVNALTFIPQFTVWANEGMLTLVEGPFDETLLDSCWLAIAATDDDTVNQRVSDAAESRRIFCNVVDAPKAASFIMPSIIDRSPLMVAVSSGGTSPVLARLLREKLESLLPQHLGQVARYAGQLRARVKKQFATMGERRRFWEKFFVNDRLAQSLANADEKAVNATTERLFSEPLDHRGEVVLVGAGPGDAGLLTLKGLQQIQQADIVVYDRLVSDDIMNLVRRDADRVFVGKRAGYHCVPQEEINQILLREAQKGKRVVRLKGGDPFIFGRGGEELETLCHAGIPFSVVPGITAASGCSAYSGIPLTHRDYAQSVRLVTGHLKTGGELDWENLAAEKQTLVFYMGLNQAATIQEKLIAFGMQADMPVALVENGTSVKQRVVHGVLTQLGELAQQVESPALIIVGRVVGLRDKLNWFSNYYD</sequence>
<gene>
    <name evidence="1" type="primary">cysG</name>
    <name type="ordered locus">SeAg_B3675</name>
</gene>
<proteinExistence type="inferred from homology"/>
<evidence type="ECO:0000255" key="1">
    <source>
        <dbReference type="HAMAP-Rule" id="MF_01646"/>
    </source>
</evidence>
<organism>
    <name type="scientific">Salmonella agona (strain SL483)</name>
    <dbReference type="NCBI Taxonomy" id="454166"/>
    <lineage>
        <taxon>Bacteria</taxon>
        <taxon>Pseudomonadati</taxon>
        <taxon>Pseudomonadota</taxon>
        <taxon>Gammaproteobacteria</taxon>
        <taxon>Enterobacterales</taxon>
        <taxon>Enterobacteriaceae</taxon>
        <taxon>Salmonella</taxon>
    </lineage>
</organism>
<dbReference type="EC" id="2.1.1.107" evidence="1"/>
<dbReference type="EC" id="1.3.1.76" evidence="1"/>
<dbReference type="EC" id="4.99.1.4" evidence="1"/>
<dbReference type="EMBL" id="CP001138">
    <property type="protein sequence ID" value="ACH52886.1"/>
    <property type="molecule type" value="Genomic_DNA"/>
</dbReference>
<dbReference type="RefSeq" id="WP_000349898.1">
    <property type="nucleotide sequence ID" value="NC_011149.1"/>
</dbReference>
<dbReference type="SMR" id="B5F8J0"/>
<dbReference type="KEGG" id="sea:SeAg_B3675"/>
<dbReference type="HOGENOM" id="CLU_011276_2_1_6"/>
<dbReference type="UniPathway" id="UPA00148">
    <property type="reaction ID" value="UER00211"/>
</dbReference>
<dbReference type="UniPathway" id="UPA00148">
    <property type="reaction ID" value="UER00222"/>
</dbReference>
<dbReference type="UniPathway" id="UPA00262">
    <property type="reaction ID" value="UER00211"/>
</dbReference>
<dbReference type="UniPathway" id="UPA00262">
    <property type="reaction ID" value="UER00222"/>
</dbReference>
<dbReference type="UniPathway" id="UPA00262">
    <property type="reaction ID" value="UER00376"/>
</dbReference>
<dbReference type="Proteomes" id="UP000008819">
    <property type="component" value="Chromosome"/>
</dbReference>
<dbReference type="GO" id="GO:0051287">
    <property type="term" value="F:NAD binding"/>
    <property type="evidence" value="ECO:0007669"/>
    <property type="project" value="InterPro"/>
</dbReference>
<dbReference type="GO" id="GO:0043115">
    <property type="term" value="F:precorrin-2 dehydrogenase activity"/>
    <property type="evidence" value="ECO:0007669"/>
    <property type="project" value="UniProtKB-UniRule"/>
</dbReference>
<dbReference type="GO" id="GO:0051266">
    <property type="term" value="F:sirohydrochlorin ferrochelatase activity"/>
    <property type="evidence" value="ECO:0007669"/>
    <property type="project" value="UniProtKB-EC"/>
</dbReference>
<dbReference type="GO" id="GO:0004851">
    <property type="term" value="F:uroporphyrin-III C-methyltransferase activity"/>
    <property type="evidence" value="ECO:0007669"/>
    <property type="project" value="UniProtKB-UniRule"/>
</dbReference>
<dbReference type="GO" id="GO:0009236">
    <property type="term" value="P:cobalamin biosynthetic process"/>
    <property type="evidence" value="ECO:0007669"/>
    <property type="project" value="UniProtKB-UniRule"/>
</dbReference>
<dbReference type="GO" id="GO:0032259">
    <property type="term" value="P:methylation"/>
    <property type="evidence" value="ECO:0007669"/>
    <property type="project" value="UniProtKB-KW"/>
</dbReference>
<dbReference type="GO" id="GO:0019354">
    <property type="term" value="P:siroheme biosynthetic process"/>
    <property type="evidence" value="ECO:0007669"/>
    <property type="project" value="UniProtKB-UniRule"/>
</dbReference>
<dbReference type="CDD" id="cd11642">
    <property type="entry name" value="SUMT"/>
    <property type="match status" value="1"/>
</dbReference>
<dbReference type="FunFam" id="1.10.8.210:FF:000001">
    <property type="entry name" value="Siroheme synthase"/>
    <property type="match status" value="1"/>
</dbReference>
<dbReference type="FunFam" id="3.30.160.110:FF:000001">
    <property type="entry name" value="Siroheme synthase"/>
    <property type="match status" value="1"/>
</dbReference>
<dbReference type="FunFam" id="3.30.950.10:FF:000001">
    <property type="entry name" value="Siroheme synthase"/>
    <property type="match status" value="1"/>
</dbReference>
<dbReference type="FunFam" id="3.40.1010.10:FF:000001">
    <property type="entry name" value="Siroheme synthase"/>
    <property type="match status" value="1"/>
</dbReference>
<dbReference type="FunFam" id="3.40.50.720:FF:000092">
    <property type="entry name" value="Siroheme synthase"/>
    <property type="match status" value="1"/>
</dbReference>
<dbReference type="Gene3D" id="3.40.1010.10">
    <property type="entry name" value="Cobalt-precorrin-4 Transmethylase, Domain 1"/>
    <property type="match status" value="1"/>
</dbReference>
<dbReference type="Gene3D" id="3.30.950.10">
    <property type="entry name" value="Methyltransferase, Cobalt-precorrin-4 Transmethylase, Domain 2"/>
    <property type="match status" value="1"/>
</dbReference>
<dbReference type="Gene3D" id="3.40.50.720">
    <property type="entry name" value="NAD(P)-binding Rossmann-like Domain"/>
    <property type="match status" value="1"/>
</dbReference>
<dbReference type="Gene3D" id="1.10.8.210">
    <property type="entry name" value="Sirohaem synthase, dimerisation domain"/>
    <property type="match status" value="1"/>
</dbReference>
<dbReference type="Gene3D" id="3.30.160.110">
    <property type="entry name" value="Siroheme synthase, domain 2"/>
    <property type="match status" value="1"/>
</dbReference>
<dbReference type="HAMAP" id="MF_01646">
    <property type="entry name" value="Siroheme_synth"/>
    <property type="match status" value="1"/>
</dbReference>
<dbReference type="InterPro" id="IPR000878">
    <property type="entry name" value="4pyrrol_Mease"/>
</dbReference>
<dbReference type="InterPro" id="IPR035996">
    <property type="entry name" value="4pyrrol_Methylase_sf"/>
</dbReference>
<dbReference type="InterPro" id="IPR014777">
    <property type="entry name" value="4pyrrole_Mease_sub1"/>
</dbReference>
<dbReference type="InterPro" id="IPR014776">
    <property type="entry name" value="4pyrrole_Mease_sub2"/>
</dbReference>
<dbReference type="InterPro" id="IPR006366">
    <property type="entry name" value="CobA/CysG_C"/>
</dbReference>
<dbReference type="InterPro" id="IPR036291">
    <property type="entry name" value="NAD(P)-bd_dom_sf"/>
</dbReference>
<dbReference type="InterPro" id="IPR050161">
    <property type="entry name" value="Siro_Cobalamin_biosynth"/>
</dbReference>
<dbReference type="InterPro" id="IPR037115">
    <property type="entry name" value="Sirohaem_synt_dimer_dom_sf"/>
</dbReference>
<dbReference type="InterPro" id="IPR012409">
    <property type="entry name" value="Sirohaem_synth"/>
</dbReference>
<dbReference type="InterPro" id="IPR028281">
    <property type="entry name" value="Sirohaem_synthase_central"/>
</dbReference>
<dbReference type="InterPro" id="IPR019478">
    <property type="entry name" value="Sirohaem_synthase_dimer_dom"/>
</dbReference>
<dbReference type="InterPro" id="IPR006367">
    <property type="entry name" value="Sirohaem_synthase_N"/>
</dbReference>
<dbReference type="InterPro" id="IPR003043">
    <property type="entry name" value="Uropor_MeTrfase_CS"/>
</dbReference>
<dbReference type="NCBIfam" id="TIGR01469">
    <property type="entry name" value="cobA_cysG_Cterm"/>
    <property type="match status" value="1"/>
</dbReference>
<dbReference type="NCBIfam" id="TIGR01470">
    <property type="entry name" value="cysG_Nterm"/>
    <property type="match status" value="1"/>
</dbReference>
<dbReference type="NCBIfam" id="NF004790">
    <property type="entry name" value="PRK06136.1"/>
    <property type="match status" value="1"/>
</dbReference>
<dbReference type="NCBIfam" id="NF007922">
    <property type="entry name" value="PRK10637.1"/>
    <property type="match status" value="1"/>
</dbReference>
<dbReference type="PANTHER" id="PTHR45790:SF1">
    <property type="entry name" value="SIROHEME SYNTHASE"/>
    <property type="match status" value="1"/>
</dbReference>
<dbReference type="PANTHER" id="PTHR45790">
    <property type="entry name" value="SIROHEME SYNTHASE-RELATED"/>
    <property type="match status" value="1"/>
</dbReference>
<dbReference type="Pfam" id="PF10414">
    <property type="entry name" value="CysG_dimeriser"/>
    <property type="match status" value="1"/>
</dbReference>
<dbReference type="Pfam" id="PF13241">
    <property type="entry name" value="NAD_binding_7"/>
    <property type="match status" value="1"/>
</dbReference>
<dbReference type="Pfam" id="PF14824">
    <property type="entry name" value="Sirohm_synth_M"/>
    <property type="match status" value="1"/>
</dbReference>
<dbReference type="Pfam" id="PF00590">
    <property type="entry name" value="TP_methylase"/>
    <property type="match status" value="1"/>
</dbReference>
<dbReference type="PIRSF" id="PIRSF036426">
    <property type="entry name" value="Sirohaem_synth"/>
    <property type="match status" value="1"/>
</dbReference>
<dbReference type="SUPFAM" id="SSF51735">
    <property type="entry name" value="NAD(P)-binding Rossmann-fold domains"/>
    <property type="match status" value="1"/>
</dbReference>
<dbReference type="SUPFAM" id="SSF75615">
    <property type="entry name" value="Siroheme synthase middle domains-like"/>
    <property type="match status" value="1"/>
</dbReference>
<dbReference type="SUPFAM" id="SSF53790">
    <property type="entry name" value="Tetrapyrrole methylase"/>
    <property type="match status" value="1"/>
</dbReference>
<dbReference type="PROSITE" id="PS00839">
    <property type="entry name" value="SUMT_1"/>
    <property type="match status" value="1"/>
</dbReference>
<dbReference type="PROSITE" id="PS00840">
    <property type="entry name" value="SUMT_2"/>
    <property type="match status" value="1"/>
</dbReference>
<protein>
    <recommendedName>
        <fullName evidence="1">Siroheme synthase</fullName>
    </recommendedName>
    <domain>
        <recommendedName>
            <fullName evidence="1">Uroporphyrinogen-III C-methyltransferase</fullName>
            <shortName evidence="1">Urogen III methylase</shortName>
            <ecNumber evidence="1">2.1.1.107</ecNumber>
        </recommendedName>
        <alternativeName>
            <fullName evidence="1">SUMT</fullName>
        </alternativeName>
        <alternativeName>
            <fullName evidence="1">Uroporphyrinogen III methylase</fullName>
            <shortName evidence="1">UROM</shortName>
        </alternativeName>
    </domain>
    <domain>
        <recommendedName>
            <fullName evidence="1">Precorrin-2 dehydrogenase</fullName>
            <ecNumber evidence="1">1.3.1.76</ecNumber>
        </recommendedName>
    </domain>
    <domain>
        <recommendedName>
            <fullName evidence="1">Sirohydrochlorin ferrochelatase</fullName>
            <ecNumber evidence="1">4.99.1.4</ecNumber>
        </recommendedName>
    </domain>
</protein>